<protein>
    <recommendedName>
        <fullName evidence="1">Peptide chain release factor subunit 1</fullName>
    </recommendedName>
    <alternativeName>
        <fullName evidence="1">Translation termination factor aRF1</fullName>
    </alternativeName>
</protein>
<name>RF1_HALMA</name>
<gene>
    <name evidence="1" type="primary">prf1</name>
    <name type="ordered locus">rrnAC3164</name>
</gene>
<accession>Q5UXY3</accession>
<keyword id="KW-0963">Cytoplasm</keyword>
<keyword id="KW-0648">Protein biosynthesis</keyword>
<keyword id="KW-1185">Reference proteome</keyword>
<reference key="1">
    <citation type="journal article" date="2004" name="Genome Res.">
        <title>Genome sequence of Haloarcula marismortui: a halophilic archaeon from the Dead Sea.</title>
        <authorList>
            <person name="Baliga N.S."/>
            <person name="Bonneau R."/>
            <person name="Facciotti M.T."/>
            <person name="Pan M."/>
            <person name="Glusman G."/>
            <person name="Deutsch E.W."/>
            <person name="Shannon P."/>
            <person name="Chiu Y."/>
            <person name="Weng R.S."/>
            <person name="Gan R.R."/>
            <person name="Hung P."/>
            <person name="Date S.V."/>
            <person name="Marcotte E."/>
            <person name="Hood L."/>
            <person name="Ng W.V."/>
        </authorList>
    </citation>
    <scope>NUCLEOTIDE SEQUENCE [LARGE SCALE GENOMIC DNA]</scope>
    <source>
        <strain>ATCC 43049 / DSM 3752 / JCM 8966 / VKM B-1809</strain>
    </source>
</reference>
<sequence>MSEQQEQEQSDKQKYEFRKVIEELKGYQGSGTQLVSIYIPEGKLISDVVAHVTQEHSEASNIKSKDTRTAVQDALTSIKDRLRYYDVRPPDNGLVVFSGAFDTGGGRTDMVTKVLESPPDPIESFRYHCDSEFLTEPLEHMLADKGLFGLIVLDRREANVGWLKGKRVEPVKSASSLVPGKQRKGGQSAQRFARLRLEAIDNFYQEVAGMANDLFVADRHEIDGILVGGPSPTKDEFLDGDYLHHELQDMVLGKFDVAYTDESGLYDLVDAADDVLAEHEMLRDKELMEDFFKQLHNGDKATYGFDQTRQNLNMGAVEQLLISEDLRKDVVAYTCENGHDEYDLINSSAGTDDHECSRCGATVDADDGEREDAIDHLMELADQRGTETVFISTDFEKGEQLLTAFGGVAGLLRYSTGV</sequence>
<evidence type="ECO:0000255" key="1">
    <source>
        <dbReference type="HAMAP-Rule" id="MF_00424"/>
    </source>
</evidence>
<proteinExistence type="inferred from homology"/>
<feature type="chain" id="PRO_0000143170" description="Peptide chain release factor subunit 1">
    <location>
        <begin position="1"/>
        <end position="418"/>
    </location>
</feature>
<organism>
    <name type="scientific">Haloarcula marismortui (strain ATCC 43049 / DSM 3752 / JCM 8966 / VKM B-1809)</name>
    <name type="common">Halobacterium marismortui</name>
    <dbReference type="NCBI Taxonomy" id="272569"/>
    <lineage>
        <taxon>Archaea</taxon>
        <taxon>Methanobacteriati</taxon>
        <taxon>Methanobacteriota</taxon>
        <taxon>Stenosarchaea group</taxon>
        <taxon>Halobacteria</taxon>
        <taxon>Halobacteriales</taxon>
        <taxon>Haloarculaceae</taxon>
        <taxon>Haloarcula</taxon>
    </lineage>
</organism>
<comment type="function">
    <text evidence="1">Directs the termination of nascent peptide synthesis (translation) in response to the termination codons UAA, UAG and UGA.</text>
</comment>
<comment type="subunit">
    <text evidence="1">Heterodimer of two subunits, one of which binds GTP.</text>
</comment>
<comment type="subcellular location">
    <subcellularLocation>
        <location evidence="1">Cytoplasm</location>
    </subcellularLocation>
</comment>
<comment type="similarity">
    <text evidence="1">Belongs to the eukaryotic release factor 1 family.</text>
</comment>
<dbReference type="EMBL" id="AY596297">
    <property type="protein sequence ID" value="AAV47870.1"/>
    <property type="molecule type" value="Genomic_DNA"/>
</dbReference>
<dbReference type="RefSeq" id="WP_011224646.1">
    <property type="nucleotide sequence ID" value="NC_006396.1"/>
</dbReference>
<dbReference type="SMR" id="Q5UXY3"/>
<dbReference type="STRING" id="272569.rrnAC3164"/>
<dbReference type="PaxDb" id="272569-rrnAC3164"/>
<dbReference type="EnsemblBacteria" id="AAV47870">
    <property type="protein sequence ID" value="AAV47870"/>
    <property type="gene ID" value="rrnAC3164"/>
</dbReference>
<dbReference type="GeneID" id="40153972"/>
<dbReference type="KEGG" id="hma:rrnAC3164"/>
<dbReference type="PATRIC" id="fig|272569.17.peg.3704"/>
<dbReference type="eggNOG" id="arCOG01742">
    <property type="taxonomic scope" value="Archaea"/>
</dbReference>
<dbReference type="HOGENOM" id="CLU_035759_3_0_2"/>
<dbReference type="Proteomes" id="UP000001169">
    <property type="component" value="Chromosome I"/>
</dbReference>
<dbReference type="GO" id="GO:0005737">
    <property type="term" value="C:cytoplasm"/>
    <property type="evidence" value="ECO:0007669"/>
    <property type="project" value="UniProtKB-SubCell"/>
</dbReference>
<dbReference type="GO" id="GO:0016149">
    <property type="term" value="F:translation release factor activity, codon specific"/>
    <property type="evidence" value="ECO:0007669"/>
    <property type="project" value="UniProtKB-UniRule"/>
</dbReference>
<dbReference type="FunFam" id="3.30.420.60:FF:000003">
    <property type="entry name" value="Peptide chain release factor subunit 1"/>
    <property type="match status" value="1"/>
</dbReference>
<dbReference type="FunFam" id="3.30.960.10:FF:000003">
    <property type="entry name" value="Peptide chain release factor subunit 1"/>
    <property type="match status" value="1"/>
</dbReference>
<dbReference type="Gene3D" id="1.20.5.170">
    <property type="match status" value="1"/>
</dbReference>
<dbReference type="Gene3D" id="3.30.1330.30">
    <property type="match status" value="1"/>
</dbReference>
<dbReference type="Gene3D" id="3.30.960.10">
    <property type="entry name" value="eRF1 domain 1"/>
    <property type="match status" value="1"/>
</dbReference>
<dbReference type="Gene3D" id="3.30.420.60">
    <property type="entry name" value="eRF1 domain 2"/>
    <property type="match status" value="1"/>
</dbReference>
<dbReference type="HAMAP" id="MF_00424">
    <property type="entry name" value="Rel_fact_arch_1"/>
    <property type="match status" value="1"/>
</dbReference>
<dbReference type="InterPro" id="IPR042226">
    <property type="entry name" value="eFR1_2_sf"/>
</dbReference>
<dbReference type="InterPro" id="IPR005140">
    <property type="entry name" value="eRF1_1_Pelota"/>
</dbReference>
<dbReference type="InterPro" id="IPR024049">
    <property type="entry name" value="eRF1_1_sf"/>
</dbReference>
<dbReference type="InterPro" id="IPR005141">
    <property type="entry name" value="eRF1_2"/>
</dbReference>
<dbReference type="InterPro" id="IPR005142">
    <property type="entry name" value="eRF1_3"/>
</dbReference>
<dbReference type="InterPro" id="IPR020918">
    <property type="entry name" value="Peptide_chain-rel_aRF1"/>
</dbReference>
<dbReference type="InterPro" id="IPR004403">
    <property type="entry name" value="Peptide_chain-rel_eRF1/aRF1"/>
</dbReference>
<dbReference type="InterPro" id="IPR029064">
    <property type="entry name" value="Ribosomal_eL30-like_sf"/>
</dbReference>
<dbReference type="NCBIfam" id="TIGR03676">
    <property type="entry name" value="aRF1_eRF1"/>
    <property type="match status" value="1"/>
</dbReference>
<dbReference type="PANTHER" id="PTHR10113">
    <property type="entry name" value="PEPTIDE CHAIN RELEASE FACTOR SUBUNIT 1"/>
    <property type="match status" value="1"/>
</dbReference>
<dbReference type="Pfam" id="PF03463">
    <property type="entry name" value="eRF1_1"/>
    <property type="match status" value="1"/>
</dbReference>
<dbReference type="Pfam" id="PF03464">
    <property type="entry name" value="eRF1_2"/>
    <property type="match status" value="1"/>
</dbReference>
<dbReference type="Pfam" id="PF03465">
    <property type="entry name" value="eRF1_3"/>
    <property type="match status" value="1"/>
</dbReference>
<dbReference type="SMART" id="SM01194">
    <property type="entry name" value="eRF1_1"/>
    <property type="match status" value="1"/>
</dbReference>
<dbReference type="SUPFAM" id="SSF55315">
    <property type="entry name" value="L30e-like"/>
    <property type="match status" value="1"/>
</dbReference>
<dbReference type="SUPFAM" id="SSF55481">
    <property type="entry name" value="N-terminal domain of eukaryotic peptide chain release factor subunit 1, ERF1"/>
    <property type="match status" value="1"/>
</dbReference>
<dbReference type="SUPFAM" id="SSF53137">
    <property type="entry name" value="Translational machinery components"/>
    <property type="match status" value="1"/>
</dbReference>